<name>RL7_STRTD</name>
<evidence type="ECO:0000255" key="1">
    <source>
        <dbReference type="HAMAP-Rule" id="MF_00368"/>
    </source>
</evidence>
<evidence type="ECO:0000305" key="2"/>
<organism>
    <name type="scientific">Streptococcus thermophilus (strain ATCC BAA-491 / LMD-9)</name>
    <dbReference type="NCBI Taxonomy" id="322159"/>
    <lineage>
        <taxon>Bacteria</taxon>
        <taxon>Bacillati</taxon>
        <taxon>Bacillota</taxon>
        <taxon>Bacilli</taxon>
        <taxon>Lactobacillales</taxon>
        <taxon>Streptococcaceae</taxon>
        <taxon>Streptococcus</taxon>
    </lineage>
</organism>
<comment type="function">
    <text evidence="1">Forms part of the ribosomal stalk which helps the ribosome interact with GTP-bound translation factors. Is thus essential for accurate translation.</text>
</comment>
<comment type="subunit">
    <text evidence="1">Homodimer. Part of the ribosomal stalk of the 50S ribosomal subunit. Forms a multimeric L10(L12)X complex, where L10 forms an elongated spine to which 2 to 4 L12 dimers bind in a sequential fashion. Binds GTP-bound translation factors.</text>
</comment>
<comment type="similarity">
    <text evidence="1">Belongs to the bacterial ribosomal protein bL12 family.</text>
</comment>
<feature type="chain" id="PRO_1000072120" description="Large ribosomal subunit protein bL12">
    <location>
        <begin position="1"/>
        <end position="122"/>
    </location>
</feature>
<sequence>MALNIENIIAEIKEASILELNDLVKAIEEEFGVTAAAPVAAAADGAADAGAAKDSFDVELTSAGDKKVGVIKVVREITGEGLKEAKAIVDGAPSVIKEGVSAAEAEEIKAKLEEAGASVTLK</sequence>
<protein>
    <recommendedName>
        <fullName evidence="1">Large ribosomal subunit protein bL12</fullName>
    </recommendedName>
    <alternativeName>
        <fullName evidence="2">50S ribosomal protein L7/L12</fullName>
    </alternativeName>
</protein>
<keyword id="KW-0687">Ribonucleoprotein</keyword>
<keyword id="KW-0689">Ribosomal protein</keyword>
<reference key="1">
    <citation type="journal article" date="2006" name="Proc. Natl. Acad. Sci. U.S.A.">
        <title>Comparative genomics of the lactic acid bacteria.</title>
        <authorList>
            <person name="Makarova K.S."/>
            <person name="Slesarev A."/>
            <person name="Wolf Y.I."/>
            <person name="Sorokin A."/>
            <person name="Mirkin B."/>
            <person name="Koonin E.V."/>
            <person name="Pavlov A."/>
            <person name="Pavlova N."/>
            <person name="Karamychev V."/>
            <person name="Polouchine N."/>
            <person name="Shakhova V."/>
            <person name="Grigoriev I."/>
            <person name="Lou Y."/>
            <person name="Rohksar D."/>
            <person name="Lucas S."/>
            <person name="Huang K."/>
            <person name="Goodstein D.M."/>
            <person name="Hawkins T."/>
            <person name="Plengvidhya V."/>
            <person name="Welker D."/>
            <person name="Hughes J."/>
            <person name="Goh Y."/>
            <person name="Benson A."/>
            <person name="Baldwin K."/>
            <person name="Lee J.-H."/>
            <person name="Diaz-Muniz I."/>
            <person name="Dosti B."/>
            <person name="Smeianov V."/>
            <person name="Wechter W."/>
            <person name="Barabote R."/>
            <person name="Lorca G."/>
            <person name="Altermann E."/>
            <person name="Barrangou R."/>
            <person name="Ganesan B."/>
            <person name="Xie Y."/>
            <person name="Rawsthorne H."/>
            <person name="Tamir D."/>
            <person name="Parker C."/>
            <person name="Breidt F."/>
            <person name="Broadbent J.R."/>
            <person name="Hutkins R."/>
            <person name="O'Sullivan D."/>
            <person name="Steele J."/>
            <person name="Unlu G."/>
            <person name="Saier M.H. Jr."/>
            <person name="Klaenhammer T."/>
            <person name="Richardson P."/>
            <person name="Kozyavkin S."/>
            <person name="Weimer B.C."/>
            <person name="Mills D.A."/>
        </authorList>
    </citation>
    <scope>NUCLEOTIDE SEQUENCE [LARGE SCALE GENOMIC DNA]</scope>
    <source>
        <strain>ATCC BAA-491 / LMD-9</strain>
    </source>
</reference>
<accession>Q03LT1</accession>
<proteinExistence type="inferred from homology"/>
<dbReference type="EMBL" id="CP000419">
    <property type="protein sequence ID" value="ABJ65841.1"/>
    <property type="molecule type" value="Genomic_DNA"/>
</dbReference>
<dbReference type="RefSeq" id="WP_011680864.1">
    <property type="nucleotide sequence ID" value="NZ_CP086001.1"/>
</dbReference>
<dbReference type="SMR" id="Q03LT1"/>
<dbReference type="KEGG" id="ste:STER_0568"/>
<dbReference type="HOGENOM" id="CLU_086499_3_2_9"/>
<dbReference type="GO" id="GO:0022625">
    <property type="term" value="C:cytosolic large ribosomal subunit"/>
    <property type="evidence" value="ECO:0007669"/>
    <property type="project" value="TreeGrafter"/>
</dbReference>
<dbReference type="GO" id="GO:0003729">
    <property type="term" value="F:mRNA binding"/>
    <property type="evidence" value="ECO:0007669"/>
    <property type="project" value="TreeGrafter"/>
</dbReference>
<dbReference type="GO" id="GO:0003735">
    <property type="term" value="F:structural constituent of ribosome"/>
    <property type="evidence" value="ECO:0007669"/>
    <property type="project" value="InterPro"/>
</dbReference>
<dbReference type="GO" id="GO:0006412">
    <property type="term" value="P:translation"/>
    <property type="evidence" value="ECO:0007669"/>
    <property type="project" value="UniProtKB-UniRule"/>
</dbReference>
<dbReference type="CDD" id="cd00387">
    <property type="entry name" value="Ribosomal_L7_L12"/>
    <property type="match status" value="1"/>
</dbReference>
<dbReference type="FunFam" id="1.20.5.710:FF:000002">
    <property type="entry name" value="50S ribosomal protein L7/L12"/>
    <property type="match status" value="1"/>
</dbReference>
<dbReference type="FunFam" id="3.30.1390.10:FF:000001">
    <property type="entry name" value="50S ribosomal protein L7/L12"/>
    <property type="match status" value="1"/>
</dbReference>
<dbReference type="Gene3D" id="3.30.1390.10">
    <property type="match status" value="1"/>
</dbReference>
<dbReference type="Gene3D" id="1.20.5.710">
    <property type="entry name" value="Single helix bin"/>
    <property type="match status" value="1"/>
</dbReference>
<dbReference type="HAMAP" id="MF_00368">
    <property type="entry name" value="Ribosomal_bL12"/>
    <property type="match status" value="1"/>
</dbReference>
<dbReference type="InterPro" id="IPR000206">
    <property type="entry name" value="Ribosomal_bL12"/>
</dbReference>
<dbReference type="InterPro" id="IPR013823">
    <property type="entry name" value="Ribosomal_bL12_C"/>
</dbReference>
<dbReference type="InterPro" id="IPR014719">
    <property type="entry name" value="Ribosomal_bL12_C/ClpS-like"/>
</dbReference>
<dbReference type="InterPro" id="IPR008932">
    <property type="entry name" value="Ribosomal_bL12_oligo"/>
</dbReference>
<dbReference type="InterPro" id="IPR036235">
    <property type="entry name" value="Ribosomal_bL12_oligo_N_sf"/>
</dbReference>
<dbReference type="NCBIfam" id="TIGR00855">
    <property type="entry name" value="L12"/>
    <property type="match status" value="1"/>
</dbReference>
<dbReference type="PANTHER" id="PTHR45987">
    <property type="entry name" value="39S RIBOSOMAL PROTEIN L12"/>
    <property type="match status" value="1"/>
</dbReference>
<dbReference type="PANTHER" id="PTHR45987:SF4">
    <property type="entry name" value="LARGE RIBOSOMAL SUBUNIT PROTEIN BL12M"/>
    <property type="match status" value="1"/>
</dbReference>
<dbReference type="Pfam" id="PF00542">
    <property type="entry name" value="Ribosomal_L12"/>
    <property type="match status" value="1"/>
</dbReference>
<dbReference type="Pfam" id="PF16320">
    <property type="entry name" value="Ribosomal_L12_N"/>
    <property type="match status" value="1"/>
</dbReference>
<dbReference type="SUPFAM" id="SSF54736">
    <property type="entry name" value="ClpS-like"/>
    <property type="match status" value="1"/>
</dbReference>
<dbReference type="SUPFAM" id="SSF48300">
    <property type="entry name" value="Ribosomal protein L7/12, oligomerisation (N-terminal) domain"/>
    <property type="match status" value="1"/>
</dbReference>
<gene>
    <name evidence="1" type="primary">rplL</name>
    <name type="ordered locus">STER_0568</name>
</gene>